<name>MSCL_PECAS</name>
<keyword id="KW-0997">Cell inner membrane</keyword>
<keyword id="KW-1003">Cell membrane</keyword>
<keyword id="KW-0407">Ion channel</keyword>
<keyword id="KW-0406">Ion transport</keyword>
<keyword id="KW-0472">Membrane</keyword>
<keyword id="KW-1185">Reference proteome</keyword>
<keyword id="KW-0812">Transmembrane</keyword>
<keyword id="KW-1133">Transmembrane helix</keyword>
<keyword id="KW-0813">Transport</keyword>
<comment type="function">
    <text evidence="1">Channel that opens in response to stretch forces in the membrane lipid bilayer. May participate in the regulation of osmotic pressure changes within the cell.</text>
</comment>
<comment type="subunit">
    <text evidence="1">Homopentamer.</text>
</comment>
<comment type="subcellular location">
    <subcellularLocation>
        <location evidence="1">Cell inner membrane</location>
        <topology evidence="1">Multi-pass membrane protein</topology>
    </subcellularLocation>
</comment>
<comment type="similarity">
    <text evidence="1">Belongs to the MscL family.</text>
</comment>
<protein>
    <recommendedName>
        <fullName evidence="1">Large-conductance mechanosensitive channel</fullName>
    </recommendedName>
</protein>
<dbReference type="EMBL" id="BX950851">
    <property type="protein sequence ID" value="CAG76900.1"/>
    <property type="molecule type" value="Genomic_DNA"/>
</dbReference>
<dbReference type="RefSeq" id="WP_011095497.1">
    <property type="nucleotide sequence ID" value="NC_004547.2"/>
</dbReference>
<dbReference type="SMR" id="Q6CZZ8"/>
<dbReference type="STRING" id="218491.ECA4003"/>
<dbReference type="GeneID" id="57210667"/>
<dbReference type="KEGG" id="eca:ECA4003"/>
<dbReference type="PATRIC" id="fig|218491.5.peg.4069"/>
<dbReference type="eggNOG" id="COG1970">
    <property type="taxonomic scope" value="Bacteria"/>
</dbReference>
<dbReference type="HOGENOM" id="CLU_095787_0_0_6"/>
<dbReference type="OrthoDB" id="9810350at2"/>
<dbReference type="Proteomes" id="UP000007966">
    <property type="component" value="Chromosome"/>
</dbReference>
<dbReference type="GO" id="GO:0005886">
    <property type="term" value="C:plasma membrane"/>
    <property type="evidence" value="ECO:0007669"/>
    <property type="project" value="UniProtKB-SubCell"/>
</dbReference>
<dbReference type="GO" id="GO:0008381">
    <property type="term" value="F:mechanosensitive monoatomic ion channel activity"/>
    <property type="evidence" value="ECO:0007669"/>
    <property type="project" value="UniProtKB-UniRule"/>
</dbReference>
<dbReference type="FunFam" id="1.10.1200.120:FF:000001">
    <property type="entry name" value="Large-conductance mechanosensitive channel"/>
    <property type="match status" value="1"/>
</dbReference>
<dbReference type="Gene3D" id="1.10.1200.120">
    <property type="entry name" value="Large-conductance mechanosensitive channel, MscL, domain 1"/>
    <property type="match status" value="1"/>
</dbReference>
<dbReference type="HAMAP" id="MF_00115">
    <property type="entry name" value="MscL"/>
    <property type="match status" value="1"/>
</dbReference>
<dbReference type="InterPro" id="IPR019823">
    <property type="entry name" value="Mechanosensitive_channel_CS"/>
</dbReference>
<dbReference type="InterPro" id="IPR001185">
    <property type="entry name" value="MS_channel"/>
</dbReference>
<dbReference type="InterPro" id="IPR037673">
    <property type="entry name" value="MSC/AndL"/>
</dbReference>
<dbReference type="InterPro" id="IPR036019">
    <property type="entry name" value="MscL_channel"/>
</dbReference>
<dbReference type="NCBIfam" id="TIGR00220">
    <property type="entry name" value="mscL"/>
    <property type="match status" value="1"/>
</dbReference>
<dbReference type="NCBIfam" id="NF001841">
    <property type="entry name" value="PRK00567.1-1"/>
    <property type="match status" value="1"/>
</dbReference>
<dbReference type="NCBIfam" id="NF001843">
    <property type="entry name" value="PRK00567.1-4"/>
    <property type="match status" value="1"/>
</dbReference>
<dbReference type="PANTHER" id="PTHR30266:SF2">
    <property type="entry name" value="LARGE-CONDUCTANCE MECHANOSENSITIVE CHANNEL"/>
    <property type="match status" value="1"/>
</dbReference>
<dbReference type="PANTHER" id="PTHR30266">
    <property type="entry name" value="MECHANOSENSITIVE CHANNEL MSCL"/>
    <property type="match status" value="1"/>
</dbReference>
<dbReference type="Pfam" id="PF01741">
    <property type="entry name" value="MscL"/>
    <property type="match status" value="1"/>
</dbReference>
<dbReference type="PRINTS" id="PR01264">
    <property type="entry name" value="MECHCHANNEL"/>
</dbReference>
<dbReference type="SUPFAM" id="SSF81330">
    <property type="entry name" value="Gated mechanosensitive channel"/>
    <property type="match status" value="1"/>
</dbReference>
<dbReference type="PROSITE" id="PS01327">
    <property type="entry name" value="MSCL"/>
    <property type="match status" value="1"/>
</dbReference>
<proteinExistence type="inferred from homology"/>
<evidence type="ECO:0000255" key="1">
    <source>
        <dbReference type="HAMAP-Rule" id="MF_00115"/>
    </source>
</evidence>
<reference key="1">
    <citation type="journal article" date="2004" name="Proc. Natl. Acad. Sci. U.S.A.">
        <title>Genome sequence of the enterobacterial phytopathogen Erwinia carotovora subsp. atroseptica and characterization of virulence factors.</title>
        <authorList>
            <person name="Bell K.S."/>
            <person name="Sebaihia M."/>
            <person name="Pritchard L."/>
            <person name="Holden M.T.G."/>
            <person name="Hyman L.J."/>
            <person name="Holeva M.C."/>
            <person name="Thomson N.R."/>
            <person name="Bentley S.D."/>
            <person name="Churcher L.J.C."/>
            <person name="Mungall K."/>
            <person name="Atkin R."/>
            <person name="Bason N."/>
            <person name="Brooks K."/>
            <person name="Chillingworth T."/>
            <person name="Clark K."/>
            <person name="Doggett J."/>
            <person name="Fraser A."/>
            <person name="Hance Z."/>
            <person name="Hauser H."/>
            <person name="Jagels K."/>
            <person name="Moule S."/>
            <person name="Norbertczak H."/>
            <person name="Ormond D."/>
            <person name="Price C."/>
            <person name="Quail M.A."/>
            <person name="Sanders M."/>
            <person name="Walker D."/>
            <person name="Whitehead S."/>
            <person name="Salmond G.P.C."/>
            <person name="Birch P.R.J."/>
            <person name="Parkhill J."/>
            <person name="Toth I.K."/>
        </authorList>
    </citation>
    <scope>NUCLEOTIDE SEQUENCE [LARGE SCALE GENOMIC DNA]</scope>
    <source>
        <strain>SCRI 1043 / ATCC BAA-672</strain>
    </source>
</reference>
<sequence length="136" mass="14984">MSIIKEFREFAMRGNVVDLAVGVIIGAAFGKIVSSLVSDIIMPPLGLLIGGVDFKQLSLILRDAQGEIPAVVMNYGAFIQNIFDFVIVAFAIFIAIKLMNKMRRKQEDTPAAAPKPSAEEKLLAEIRDLLKEQHKQ</sequence>
<feature type="chain" id="PRO_0000237999" description="Large-conductance mechanosensitive channel">
    <location>
        <begin position="1"/>
        <end position="136"/>
    </location>
</feature>
<feature type="transmembrane region" description="Helical" evidence="1">
    <location>
        <begin position="10"/>
        <end position="30"/>
    </location>
</feature>
<feature type="transmembrane region" description="Helical" evidence="1">
    <location>
        <begin position="76"/>
        <end position="96"/>
    </location>
</feature>
<gene>
    <name evidence="1" type="primary">mscL</name>
    <name type="ordered locus">ECA4003</name>
</gene>
<organism>
    <name type="scientific">Pectobacterium atrosepticum (strain SCRI 1043 / ATCC BAA-672)</name>
    <name type="common">Erwinia carotovora subsp. atroseptica</name>
    <dbReference type="NCBI Taxonomy" id="218491"/>
    <lineage>
        <taxon>Bacteria</taxon>
        <taxon>Pseudomonadati</taxon>
        <taxon>Pseudomonadota</taxon>
        <taxon>Gammaproteobacteria</taxon>
        <taxon>Enterobacterales</taxon>
        <taxon>Pectobacteriaceae</taxon>
        <taxon>Pectobacterium</taxon>
    </lineage>
</organism>
<accession>Q6CZZ8</accession>